<sequence length="355" mass="39764">MFADKLHPFLDRYDEISTLLSDPNIANDIEKMTKLSKEQSSIEPVATAATKYLQILNDIEENKALLEDAELGELAKEELKSLEISREKLEEEIKILLLPKDPNDDKNIFLEIRAGTGGDEAALFAGDLFNAYIRYAELRGYKFEIVSQSEGNTGGFKEIIVLIKGKGAYSRLKFEGGTHRVQRVPETESQGRVHTSAVTVAIMPEVEDSEIEINPNDIRVDVMRSSGHGGQSVNTTDSAVRITHIPTGLVVTNQDGKSQHKNKEAAMKVLKARLYEMQEQERLAKETSERKSQVGTGDRSGRIRTYNYPQNRISDHRINLTLYRLDAIMAAGLFDEIIEPLITHYQAEAMLEAGI</sequence>
<comment type="function">
    <text evidence="1">Peptide chain release factor 1 directs the termination of translation in response to the peptide chain termination codons UAG and UAA.</text>
</comment>
<comment type="subcellular location">
    <subcellularLocation>
        <location evidence="1">Cytoplasm</location>
    </subcellularLocation>
</comment>
<comment type="PTM">
    <text evidence="1">Methylated by PrmC. Methylation increases the termination efficiency of RF1.</text>
</comment>
<comment type="similarity">
    <text evidence="1">Belongs to the prokaryotic/mitochondrial release factor family.</text>
</comment>
<evidence type="ECO:0000255" key="1">
    <source>
        <dbReference type="HAMAP-Rule" id="MF_00093"/>
    </source>
</evidence>
<evidence type="ECO:0000256" key="2">
    <source>
        <dbReference type="SAM" id="MobiDB-lite"/>
    </source>
</evidence>
<organism>
    <name type="scientific">Campylobacter concisus (strain 13826)</name>
    <dbReference type="NCBI Taxonomy" id="360104"/>
    <lineage>
        <taxon>Bacteria</taxon>
        <taxon>Pseudomonadati</taxon>
        <taxon>Campylobacterota</taxon>
        <taxon>Epsilonproteobacteria</taxon>
        <taxon>Campylobacterales</taxon>
        <taxon>Campylobacteraceae</taxon>
        <taxon>Campylobacter</taxon>
    </lineage>
</organism>
<reference key="1">
    <citation type="submission" date="2007-10" db="EMBL/GenBank/DDBJ databases">
        <title>Genome sequence of Campylobacter concisus 13826 isolated from human feces.</title>
        <authorList>
            <person name="Fouts D.E."/>
            <person name="Mongodin E.F."/>
            <person name="Puiu D."/>
            <person name="Sebastian Y."/>
            <person name="Miller W.G."/>
            <person name="Mandrell R.E."/>
            <person name="On S."/>
            <person name="Nelson K.E."/>
        </authorList>
    </citation>
    <scope>NUCLEOTIDE SEQUENCE [LARGE SCALE GENOMIC DNA]</scope>
    <source>
        <strain>13826</strain>
    </source>
</reference>
<keyword id="KW-0963">Cytoplasm</keyword>
<keyword id="KW-0488">Methylation</keyword>
<keyword id="KW-0648">Protein biosynthesis</keyword>
<feature type="chain" id="PRO_1000004871" description="Peptide chain release factor 1">
    <location>
        <begin position="1"/>
        <end position="355"/>
    </location>
</feature>
<feature type="region of interest" description="Disordered" evidence="2">
    <location>
        <begin position="283"/>
        <end position="306"/>
    </location>
</feature>
<feature type="compositionally biased region" description="Basic and acidic residues" evidence="2">
    <location>
        <begin position="283"/>
        <end position="292"/>
    </location>
</feature>
<feature type="modified residue" description="N5-methylglutamine" evidence="1">
    <location>
        <position position="231"/>
    </location>
</feature>
<dbReference type="EMBL" id="CP000792">
    <property type="protein sequence ID" value="EAT99101.1"/>
    <property type="molecule type" value="Genomic_DNA"/>
</dbReference>
<dbReference type="RefSeq" id="WP_012000993.1">
    <property type="nucleotide sequence ID" value="NC_009802.2"/>
</dbReference>
<dbReference type="SMR" id="A7ZB10"/>
<dbReference type="STRING" id="360104.CCC13826_1805"/>
<dbReference type="KEGG" id="cco:CCC13826_1805"/>
<dbReference type="eggNOG" id="COG0216">
    <property type="taxonomic scope" value="Bacteria"/>
</dbReference>
<dbReference type="HOGENOM" id="CLU_036856_0_1_7"/>
<dbReference type="OrthoDB" id="9806673at2"/>
<dbReference type="Proteomes" id="UP000001121">
    <property type="component" value="Chromosome"/>
</dbReference>
<dbReference type="GO" id="GO:0005737">
    <property type="term" value="C:cytoplasm"/>
    <property type="evidence" value="ECO:0007669"/>
    <property type="project" value="UniProtKB-SubCell"/>
</dbReference>
<dbReference type="GO" id="GO:0016149">
    <property type="term" value="F:translation release factor activity, codon specific"/>
    <property type="evidence" value="ECO:0007669"/>
    <property type="project" value="UniProtKB-UniRule"/>
</dbReference>
<dbReference type="FunFam" id="3.30.160.20:FF:000004">
    <property type="entry name" value="Peptide chain release factor 1"/>
    <property type="match status" value="1"/>
</dbReference>
<dbReference type="FunFam" id="3.30.70.1660:FF:000002">
    <property type="entry name" value="Peptide chain release factor 1"/>
    <property type="match status" value="1"/>
</dbReference>
<dbReference type="FunFam" id="3.30.70.1660:FF:000004">
    <property type="entry name" value="Peptide chain release factor 1"/>
    <property type="match status" value="1"/>
</dbReference>
<dbReference type="Gene3D" id="3.30.160.20">
    <property type="match status" value="1"/>
</dbReference>
<dbReference type="Gene3D" id="3.30.70.1660">
    <property type="match status" value="1"/>
</dbReference>
<dbReference type="Gene3D" id="6.10.140.1950">
    <property type="match status" value="1"/>
</dbReference>
<dbReference type="HAMAP" id="MF_00093">
    <property type="entry name" value="Rel_fac_1"/>
    <property type="match status" value="1"/>
</dbReference>
<dbReference type="InterPro" id="IPR005139">
    <property type="entry name" value="PCRF"/>
</dbReference>
<dbReference type="InterPro" id="IPR000352">
    <property type="entry name" value="Pep_chain_release_fac_I"/>
</dbReference>
<dbReference type="InterPro" id="IPR045853">
    <property type="entry name" value="Pep_chain_release_fac_I_sf"/>
</dbReference>
<dbReference type="InterPro" id="IPR050057">
    <property type="entry name" value="Prokaryotic/Mito_RF"/>
</dbReference>
<dbReference type="InterPro" id="IPR004373">
    <property type="entry name" value="RF-1"/>
</dbReference>
<dbReference type="NCBIfam" id="TIGR00019">
    <property type="entry name" value="prfA"/>
    <property type="match status" value="1"/>
</dbReference>
<dbReference type="NCBIfam" id="NF001859">
    <property type="entry name" value="PRK00591.1"/>
    <property type="match status" value="1"/>
</dbReference>
<dbReference type="PANTHER" id="PTHR43804">
    <property type="entry name" value="LD18447P"/>
    <property type="match status" value="1"/>
</dbReference>
<dbReference type="PANTHER" id="PTHR43804:SF7">
    <property type="entry name" value="LD18447P"/>
    <property type="match status" value="1"/>
</dbReference>
<dbReference type="Pfam" id="PF03462">
    <property type="entry name" value="PCRF"/>
    <property type="match status" value="1"/>
</dbReference>
<dbReference type="Pfam" id="PF00472">
    <property type="entry name" value="RF-1"/>
    <property type="match status" value="1"/>
</dbReference>
<dbReference type="SMART" id="SM00937">
    <property type="entry name" value="PCRF"/>
    <property type="match status" value="1"/>
</dbReference>
<dbReference type="SUPFAM" id="SSF75620">
    <property type="entry name" value="Release factor"/>
    <property type="match status" value="1"/>
</dbReference>
<dbReference type="PROSITE" id="PS00745">
    <property type="entry name" value="RF_PROK_I"/>
    <property type="match status" value="1"/>
</dbReference>
<protein>
    <recommendedName>
        <fullName evidence="1">Peptide chain release factor 1</fullName>
        <shortName evidence="1">RF-1</shortName>
    </recommendedName>
</protein>
<proteinExistence type="inferred from homology"/>
<gene>
    <name evidence="1" type="primary">prfA</name>
    <name type="ordered locus">Ccon26_00470</name>
    <name type="ORF">CCC13826_1805</name>
</gene>
<name>RF1_CAMC1</name>
<accession>A7ZB10</accession>